<evidence type="ECO:0000255" key="1">
    <source>
        <dbReference type="HAMAP-Rule" id="MF_00051"/>
    </source>
</evidence>
<organism>
    <name type="scientific">Latilactobacillus sakei subsp. sakei (strain 23K)</name>
    <name type="common">Lactobacillus sakei subsp. sakei</name>
    <dbReference type="NCBI Taxonomy" id="314315"/>
    <lineage>
        <taxon>Bacteria</taxon>
        <taxon>Bacillati</taxon>
        <taxon>Bacillota</taxon>
        <taxon>Bacilli</taxon>
        <taxon>Lactobacillales</taxon>
        <taxon>Lactobacillaceae</taxon>
        <taxon>Latilactobacillus</taxon>
    </lineage>
</organism>
<reference key="1">
    <citation type="journal article" date="2005" name="Nat. Biotechnol.">
        <title>The complete genome sequence of the meat-borne lactic acid bacterium Lactobacillus sakei 23K.</title>
        <authorList>
            <person name="Chaillou S."/>
            <person name="Champomier-Verges M.-C."/>
            <person name="Cornet M."/>
            <person name="Crutz-Le Coq A.-M."/>
            <person name="Dudez A.-M."/>
            <person name="Martin V."/>
            <person name="Beaufils S."/>
            <person name="Darbon-Rongere E."/>
            <person name="Bossy R."/>
            <person name="Loux V."/>
            <person name="Zagorec M."/>
        </authorList>
    </citation>
    <scope>NUCLEOTIDE SEQUENCE [LARGE SCALE GENOMIC DNA]</scope>
    <source>
        <strain>23K</strain>
    </source>
</reference>
<name>GLYA_LATSS</name>
<feature type="chain" id="PRO_0000234984" description="Serine hydroxymethyltransferase">
    <location>
        <begin position="1"/>
        <end position="415"/>
    </location>
</feature>
<feature type="binding site" evidence="1">
    <location>
        <position position="115"/>
    </location>
    <ligand>
        <name>(6S)-5,6,7,8-tetrahydrofolate</name>
        <dbReference type="ChEBI" id="CHEBI:57453"/>
    </ligand>
</feature>
<feature type="binding site" evidence="1">
    <location>
        <begin position="119"/>
        <end position="121"/>
    </location>
    <ligand>
        <name>(6S)-5,6,7,8-tetrahydrofolate</name>
        <dbReference type="ChEBI" id="CHEBI:57453"/>
    </ligand>
</feature>
<feature type="binding site" evidence="1">
    <location>
        <begin position="348"/>
        <end position="350"/>
    </location>
    <ligand>
        <name>(6S)-5,6,7,8-tetrahydrofolate</name>
        <dbReference type="ChEBI" id="CHEBI:57453"/>
    </ligand>
</feature>
<feature type="site" description="Plays an important role in substrate specificity" evidence="1">
    <location>
        <position position="223"/>
    </location>
</feature>
<feature type="modified residue" description="N6-(pyridoxal phosphate)lysine" evidence="1">
    <location>
        <position position="224"/>
    </location>
</feature>
<protein>
    <recommendedName>
        <fullName evidence="1">Serine hydroxymethyltransferase</fullName>
        <shortName evidence="1">SHMT</shortName>
        <shortName evidence="1">Serine methylase</shortName>
        <ecNumber evidence="1">2.1.2.1</ecNumber>
    </recommendedName>
</protein>
<sequence>MLAKTDPVINDLIKQEENRQRHNIELIASENIVSGAVQEAQGSVLTNKYAEGYPNKRFYGGCEYIDQIETLAIERAKELFGADHVNVQPHSGSQANMAVYQALLEPGDKILGMNLTDGGHLTHGSPFNFSGQLYDFYSYGVADTNEQLDYASLAAKAQEVHPKMIVAGASAYSRTIDFPRLREIADQVGAYLMIDMAHIAGLVATGVHPSPVPYADVVTTTTHKTLRGPRGGMILCKAEYAKAIDSAIFPGIQGGPLEHVIAAKAVAFGEALQPEFTAYTKQIVANAQAMAAVFDQSDLVRVVSGGTDNHLMLLDLTNSGLNGKELQNLLDSVHITVNKNTIPFEKLSPFKTSGIRIGTPAITSRGFKEKDCEQIANLILEVIEKHDQLEAMTAISEAVLKLTDQFPITQAKFLD</sequence>
<gene>
    <name evidence="1" type="primary">glyA</name>
    <name type="ordered locus">LCA_1134</name>
</gene>
<keyword id="KW-0028">Amino-acid biosynthesis</keyword>
<keyword id="KW-0963">Cytoplasm</keyword>
<keyword id="KW-0554">One-carbon metabolism</keyword>
<keyword id="KW-0663">Pyridoxal phosphate</keyword>
<keyword id="KW-1185">Reference proteome</keyword>
<keyword id="KW-0808">Transferase</keyword>
<accession>Q38WJ7</accession>
<proteinExistence type="inferred from homology"/>
<comment type="function">
    <text evidence="1">Catalyzes the reversible interconversion of serine and glycine with tetrahydrofolate (THF) serving as the one-carbon carrier. This reaction serves as the major source of one-carbon groups required for the biosynthesis of purines, thymidylate, methionine, and other important biomolecules. Also exhibits THF-independent aldolase activity toward beta-hydroxyamino acids, producing glycine and aldehydes, via a retro-aldol mechanism.</text>
</comment>
<comment type="catalytic activity">
    <reaction evidence="1">
        <text>(6R)-5,10-methylene-5,6,7,8-tetrahydrofolate + glycine + H2O = (6S)-5,6,7,8-tetrahydrofolate + L-serine</text>
        <dbReference type="Rhea" id="RHEA:15481"/>
        <dbReference type="ChEBI" id="CHEBI:15377"/>
        <dbReference type="ChEBI" id="CHEBI:15636"/>
        <dbReference type="ChEBI" id="CHEBI:33384"/>
        <dbReference type="ChEBI" id="CHEBI:57305"/>
        <dbReference type="ChEBI" id="CHEBI:57453"/>
        <dbReference type="EC" id="2.1.2.1"/>
    </reaction>
</comment>
<comment type="cofactor">
    <cofactor evidence="1">
        <name>pyridoxal 5'-phosphate</name>
        <dbReference type="ChEBI" id="CHEBI:597326"/>
    </cofactor>
</comment>
<comment type="pathway">
    <text evidence="1">One-carbon metabolism; tetrahydrofolate interconversion.</text>
</comment>
<comment type="pathway">
    <text evidence="1">Amino-acid biosynthesis; glycine biosynthesis; glycine from L-serine: step 1/1.</text>
</comment>
<comment type="subunit">
    <text evidence="1">Homodimer.</text>
</comment>
<comment type="subcellular location">
    <subcellularLocation>
        <location evidence="1">Cytoplasm</location>
    </subcellularLocation>
</comment>
<comment type="similarity">
    <text evidence="1">Belongs to the SHMT family.</text>
</comment>
<dbReference type="EC" id="2.1.2.1" evidence="1"/>
<dbReference type="EMBL" id="CR936503">
    <property type="protein sequence ID" value="CAI55435.1"/>
    <property type="molecule type" value="Genomic_DNA"/>
</dbReference>
<dbReference type="RefSeq" id="WP_011374833.1">
    <property type="nucleotide sequence ID" value="NC_007576.1"/>
</dbReference>
<dbReference type="SMR" id="Q38WJ7"/>
<dbReference type="STRING" id="314315.LCA_1134"/>
<dbReference type="KEGG" id="lsa:LCA_1134"/>
<dbReference type="eggNOG" id="COG0112">
    <property type="taxonomic scope" value="Bacteria"/>
</dbReference>
<dbReference type="HOGENOM" id="CLU_022477_2_1_9"/>
<dbReference type="OrthoDB" id="9803846at2"/>
<dbReference type="UniPathway" id="UPA00193"/>
<dbReference type="UniPathway" id="UPA00288">
    <property type="reaction ID" value="UER01023"/>
</dbReference>
<dbReference type="Proteomes" id="UP000002707">
    <property type="component" value="Chromosome"/>
</dbReference>
<dbReference type="GO" id="GO:0005829">
    <property type="term" value="C:cytosol"/>
    <property type="evidence" value="ECO:0007669"/>
    <property type="project" value="TreeGrafter"/>
</dbReference>
<dbReference type="GO" id="GO:0004372">
    <property type="term" value="F:glycine hydroxymethyltransferase activity"/>
    <property type="evidence" value="ECO:0007669"/>
    <property type="project" value="UniProtKB-UniRule"/>
</dbReference>
<dbReference type="GO" id="GO:0030170">
    <property type="term" value="F:pyridoxal phosphate binding"/>
    <property type="evidence" value="ECO:0007669"/>
    <property type="project" value="UniProtKB-UniRule"/>
</dbReference>
<dbReference type="GO" id="GO:0019264">
    <property type="term" value="P:glycine biosynthetic process from serine"/>
    <property type="evidence" value="ECO:0007669"/>
    <property type="project" value="UniProtKB-UniRule"/>
</dbReference>
<dbReference type="GO" id="GO:0035999">
    <property type="term" value="P:tetrahydrofolate interconversion"/>
    <property type="evidence" value="ECO:0007669"/>
    <property type="project" value="UniProtKB-UniRule"/>
</dbReference>
<dbReference type="CDD" id="cd00378">
    <property type="entry name" value="SHMT"/>
    <property type="match status" value="1"/>
</dbReference>
<dbReference type="FunFam" id="3.40.640.10:FF:000001">
    <property type="entry name" value="Serine hydroxymethyltransferase"/>
    <property type="match status" value="1"/>
</dbReference>
<dbReference type="Gene3D" id="3.90.1150.10">
    <property type="entry name" value="Aspartate Aminotransferase, domain 1"/>
    <property type="match status" value="1"/>
</dbReference>
<dbReference type="Gene3D" id="3.40.640.10">
    <property type="entry name" value="Type I PLP-dependent aspartate aminotransferase-like (Major domain)"/>
    <property type="match status" value="1"/>
</dbReference>
<dbReference type="HAMAP" id="MF_00051">
    <property type="entry name" value="SHMT"/>
    <property type="match status" value="1"/>
</dbReference>
<dbReference type="InterPro" id="IPR015424">
    <property type="entry name" value="PyrdxlP-dep_Trfase"/>
</dbReference>
<dbReference type="InterPro" id="IPR015421">
    <property type="entry name" value="PyrdxlP-dep_Trfase_major"/>
</dbReference>
<dbReference type="InterPro" id="IPR015422">
    <property type="entry name" value="PyrdxlP-dep_Trfase_small"/>
</dbReference>
<dbReference type="InterPro" id="IPR001085">
    <property type="entry name" value="Ser_HO-MeTrfase"/>
</dbReference>
<dbReference type="InterPro" id="IPR049943">
    <property type="entry name" value="Ser_HO-MeTrfase-like"/>
</dbReference>
<dbReference type="InterPro" id="IPR019798">
    <property type="entry name" value="Ser_HO-MeTrfase_PLP_BS"/>
</dbReference>
<dbReference type="InterPro" id="IPR039429">
    <property type="entry name" value="SHMT-like_dom"/>
</dbReference>
<dbReference type="NCBIfam" id="NF000586">
    <property type="entry name" value="PRK00011.1"/>
    <property type="match status" value="1"/>
</dbReference>
<dbReference type="PANTHER" id="PTHR11680">
    <property type="entry name" value="SERINE HYDROXYMETHYLTRANSFERASE"/>
    <property type="match status" value="1"/>
</dbReference>
<dbReference type="PANTHER" id="PTHR11680:SF35">
    <property type="entry name" value="SERINE HYDROXYMETHYLTRANSFERASE 1"/>
    <property type="match status" value="1"/>
</dbReference>
<dbReference type="Pfam" id="PF00464">
    <property type="entry name" value="SHMT"/>
    <property type="match status" value="1"/>
</dbReference>
<dbReference type="PIRSF" id="PIRSF000412">
    <property type="entry name" value="SHMT"/>
    <property type="match status" value="1"/>
</dbReference>
<dbReference type="SUPFAM" id="SSF53383">
    <property type="entry name" value="PLP-dependent transferases"/>
    <property type="match status" value="1"/>
</dbReference>
<dbReference type="PROSITE" id="PS00096">
    <property type="entry name" value="SHMT"/>
    <property type="match status" value="1"/>
</dbReference>